<comment type="function">
    <text evidence="1">Condenses 4-methyl-5-(beta-hydroxyethyl)thiazole monophosphate (THZ-P) and 2-methyl-4-amino-5-hydroxymethyl pyrimidine pyrophosphate (HMP-PP) to form thiamine monophosphate (TMP).</text>
</comment>
<comment type="catalytic activity">
    <reaction evidence="1">
        <text>2-[(2R,5Z)-2-carboxy-4-methylthiazol-5(2H)-ylidene]ethyl phosphate + 4-amino-2-methyl-5-(diphosphooxymethyl)pyrimidine + 2 H(+) = thiamine phosphate + CO2 + diphosphate</text>
        <dbReference type="Rhea" id="RHEA:47844"/>
        <dbReference type="ChEBI" id="CHEBI:15378"/>
        <dbReference type="ChEBI" id="CHEBI:16526"/>
        <dbReference type="ChEBI" id="CHEBI:33019"/>
        <dbReference type="ChEBI" id="CHEBI:37575"/>
        <dbReference type="ChEBI" id="CHEBI:57841"/>
        <dbReference type="ChEBI" id="CHEBI:62899"/>
        <dbReference type="EC" id="2.5.1.3"/>
    </reaction>
</comment>
<comment type="catalytic activity">
    <reaction evidence="1">
        <text>2-(2-carboxy-4-methylthiazol-5-yl)ethyl phosphate + 4-amino-2-methyl-5-(diphosphooxymethyl)pyrimidine + 2 H(+) = thiamine phosphate + CO2 + diphosphate</text>
        <dbReference type="Rhea" id="RHEA:47848"/>
        <dbReference type="ChEBI" id="CHEBI:15378"/>
        <dbReference type="ChEBI" id="CHEBI:16526"/>
        <dbReference type="ChEBI" id="CHEBI:33019"/>
        <dbReference type="ChEBI" id="CHEBI:37575"/>
        <dbReference type="ChEBI" id="CHEBI:57841"/>
        <dbReference type="ChEBI" id="CHEBI:62890"/>
        <dbReference type="EC" id="2.5.1.3"/>
    </reaction>
</comment>
<comment type="catalytic activity">
    <reaction evidence="1">
        <text>4-methyl-5-(2-phosphooxyethyl)-thiazole + 4-amino-2-methyl-5-(diphosphooxymethyl)pyrimidine + H(+) = thiamine phosphate + diphosphate</text>
        <dbReference type="Rhea" id="RHEA:22328"/>
        <dbReference type="ChEBI" id="CHEBI:15378"/>
        <dbReference type="ChEBI" id="CHEBI:33019"/>
        <dbReference type="ChEBI" id="CHEBI:37575"/>
        <dbReference type="ChEBI" id="CHEBI:57841"/>
        <dbReference type="ChEBI" id="CHEBI:58296"/>
        <dbReference type="EC" id="2.5.1.3"/>
    </reaction>
</comment>
<comment type="cofactor">
    <cofactor evidence="1">
        <name>Mg(2+)</name>
        <dbReference type="ChEBI" id="CHEBI:18420"/>
    </cofactor>
    <text evidence="1">Binds 1 Mg(2+) ion per subunit.</text>
</comment>
<comment type="pathway">
    <text evidence="1">Cofactor biosynthesis; thiamine diphosphate biosynthesis; thiamine phosphate from 4-amino-2-methyl-5-diphosphomethylpyrimidine and 4-methyl-5-(2-phosphoethyl)-thiazole: step 1/1.</text>
</comment>
<comment type="similarity">
    <text evidence="1">Belongs to the thiamine-phosphate synthase family.</text>
</comment>
<protein>
    <recommendedName>
        <fullName evidence="1">Thiamine-phosphate synthase</fullName>
        <shortName evidence="1">TP synthase</shortName>
        <shortName evidence="1">TPS</shortName>
        <ecNumber evidence="1">2.5.1.3</ecNumber>
    </recommendedName>
    <alternativeName>
        <fullName evidence="1">Thiamine-phosphate pyrophosphorylase</fullName>
        <shortName evidence="1">TMP pyrophosphorylase</shortName>
        <shortName evidence="1">TMP-PPase</shortName>
    </alternativeName>
</protein>
<evidence type="ECO:0000255" key="1">
    <source>
        <dbReference type="HAMAP-Rule" id="MF_00097"/>
    </source>
</evidence>
<sequence>MPDTRLRGLYLITPDSPDTTTLVAQVERALRGQPALLQYRSKQRDAALRLGQARQIAALCREAGVPFIVNDSLELALATDADGVHLGREDGDLDAARRALGPGRILGVTCYNEWPRAVAGCAAGADYVAFGAVFPSATKPAAVRAPLELFVRGRRELDVPLAAIGGITLDNAAQVIAAGASLLAVVSDVFDAPDPGARAAAYRTLFDA</sequence>
<reference key="1">
    <citation type="journal article" date="2005" name="Arch. Microbiol.">
        <title>The genome sequence of an anaerobic aromatic-degrading denitrifying bacterium, strain EbN1.</title>
        <authorList>
            <person name="Rabus R."/>
            <person name="Kube M."/>
            <person name="Heider J."/>
            <person name="Beck A."/>
            <person name="Heitmann K."/>
            <person name="Widdel F."/>
            <person name="Reinhardt R."/>
        </authorList>
    </citation>
    <scope>NUCLEOTIDE SEQUENCE [LARGE SCALE GENOMIC DNA]</scope>
    <source>
        <strain>DSM 19018 / LMG 30748 / EbN1</strain>
    </source>
</reference>
<keyword id="KW-0460">Magnesium</keyword>
<keyword id="KW-0479">Metal-binding</keyword>
<keyword id="KW-1185">Reference proteome</keyword>
<keyword id="KW-0784">Thiamine biosynthesis</keyword>
<keyword id="KW-0808">Transferase</keyword>
<gene>
    <name evidence="1" type="primary">thiE</name>
    <name type="ordered locus">AZOSEA09410</name>
    <name type="ORF">ebB48</name>
</gene>
<name>THIE_AROAE</name>
<accession>Q5P6J5</accession>
<organism>
    <name type="scientific">Aromatoleum aromaticum (strain DSM 19018 / LMG 30748 / EbN1)</name>
    <name type="common">Azoarcus sp. (strain EbN1)</name>
    <dbReference type="NCBI Taxonomy" id="76114"/>
    <lineage>
        <taxon>Bacteria</taxon>
        <taxon>Pseudomonadati</taxon>
        <taxon>Pseudomonadota</taxon>
        <taxon>Betaproteobacteria</taxon>
        <taxon>Rhodocyclales</taxon>
        <taxon>Rhodocyclaceae</taxon>
        <taxon>Aromatoleum</taxon>
    </lineage>
</organism>
<proteinExistence type="inferred from homology"/>
<dbReference type="EC" id="2.5.1.3" evidence="1"/>
<dbReference type="EMBL" id="CR555306">
    <property type="protein sequence ID" value="CAI07066.1"/>
    <property type="molecule type" value="Genomic_DNA"/>
</dbReference>
<dbReference type="RefSeq" id="WP_011236791.1">
    <property type="nucleotide sequence ID" value="NC_006513.1"/>
</dbReference>
<dbReference type="SMR" id="Q5P6J5"/>
<dbReference type="STRING" id="76114.ebB48"/>
<dbReference type="KEGG" id="eba:ebB48"/>
<dbReference type="eggNOG" id="COG0352">
    <property type="taxonomic scope" value="Bacteria"/>
</dbReference>
<dbReference type="HOGENOM" id="CLU_018272_3_1_4"/>
<dbReference type="OrthoDB" id="9810880at2"/>
<dbReference type="UniPathway" id="UPA00060">
    <property type="reaction ID" value="UER00141"/>
</dbReference>
<dbReference type="Proteomes" id="UP000006552">
    <property type="component" value="Chromosome"/>
</dbReference>
<dbReference type="GO" id="GO:0005737">
    <property type="term" value="C:cytoplasm"/>
    <property type="evidence" value="ECO:0007669"/>
    <property type="project" value="TreeGrafter"/>
</dbReference>
<dbReference type="GO" id="GO:0000287">
    <property type="term" value="F:magnesium ion binding"/>
    <property type="evidence" value="ECO:0007669"/>
    <property type="project" value="UniProtKB-UniRule"/>
</dbReference>
<dbReference type="GO" id="GO:0004789">
    <property type="term" value="F:thiamine-phosphate diphosphorylase activity"/>
    <property type="evidence" value="ECO:0007669"/>
    <property type="project" value="UniProtKB-UniRule"/>
</dbReference>
<dbReference type="GO" id="GO:0009228">
    <property type="term" value="P:thiamine biosynthetic process"/>
    <property type="evidence" value="ECO:0007669"/>
    <property type="project" value="UniProtKB-KW"/>
</dbReference>
<dbReference type="GO" id="GO:0009229">
    <property type="term" value="P:thiamine diphosphate biosynthetic process"/>
    <property type="evidence" value="ECO:0007669"/>
    <property type="project" value="UniProtKB-UniRule"/>
</dbReference>
<dbReference type="CDD" id="cd00564">
    <property type="entry name" value="TMP_TenI"/>
    <property type="match status" value="1"/>
</dbReference>
<dbReference type="Gene3D" id="3.20.20.70">
    <property type="entry name" value="Aldolase class I"/>
    <property type="match status" value="1"/>
</dbReference>
<dbReference type="HAMAP" id="MF_00097">
    <property type="entry name" value="TMP_synthase"/>
    <property type="match status" value="1"/>
</dbReference>
<dbReference type="InterPro" id="IPR013785">
    <property type="entry name" value="Aldolase_TIM"/>
</dbReference>
<dbReference type="InterPro" id="IPR036206">
    <property type="entry name" value="ThiamineP_synth_sf"/>
</dbReference>
<dbReference type="InterPro" id="IPR022998">
    <property type="entry name" value="ThiamineP_synth_TenI"/>
</dbReference>
<dbReference type="InterPro" id="IPR034291">
    <property type="entry name" value="TMP_synthase"/>
</dbReference>
<dbReference type="NCBIfam" id="TIGR00693">
    <property type="entry name" value="thiE"/>
    <property type="match status" value="1"/>
</dbReference>
<dbReference type="PANTHER" id="PTHR20857">
    <property type="entry name" value="THIAMINE-PHOSPHATE PYROPHOSPHORYLASE"/>
    <property type="match status" value="1"/>
</dbReference>
<dbReference type="PANTHER" id="PTHR20857:SF15">
    <property type="entry name" value="THIAMINE-PHOSPHATE SYNTHASE"/>
    <property type="match status" value="1"/>
</dbReference>
<dbReference type="Pfam" id="PF02581">
    <property type="entry name" value="TMP-TENI"/>
    <property type="match status" value="1"/>
</dbReference>
<dbReference type="SUPFAM" id="SSF51391">
    <property type="entry name" value="Thiamin phosphate synthase"/>
    <property type="match status" value="1"/>
</dbReference>
<feature type="chain" id="PRO_0000336374" description="Thiamine-phosphate synthase">
    <location>
        <begin position="1"/>
        <end position="208"/>
    </location>
</feature>
<feature type="binding site" evidence="1">
    <location>
        <begin position="38"/>
        <end position="42"/>
    </location>
    <ligand>
        <name>4-amino-2-methyl-5-(diphosphooxymethyl)pyrimidine</name>
        <dbReference type="ChEBI" id="CHEBI:57841"/>
    </ligand>
</feature>
<feature type="binding site" evidence="1">
    <location>
        <position position="70"/>
    </location>
    <ligand>
        <name>4-amino-2-methyl-5-(diphosphooxymethyl)pyrimidine</name>
        <dbReference type="ChEBI" id="CHEBI:57841"/>
    </ligand>
</feature>
<feature type="binding site" evidence="1">
    <location>
        <position position="71"/>
    </location>
    <ligand>
        <name>Mg(2+)</name>
        <dbReference type="ChEBI" id="CHEBI:18420"/>
    </ligand>
</feature>
<feature type="binding site" evidence="1">
    <location>
        <position position="90"/>
    </location>
    <ligand>
        <name>Mg(2+)</name>
        <dbReference type="ChEBI" id="CHEBI:18420"/>
    </ligand>
</feature>
<feature type="binding site" evidence="1">
    <location>
        <position position="109"/>
    </location>
    <ligand>
        <name>4-amino-2-methyl-5-(diphosphooxymethyl)pyrimidine</name>
        <dbReference type="ChEBI" id="CHEBI:57841"/>
    </ligand>
</feature>
<feature type="binding site" evidence="1">
    <location>
        <begin position="136"/>
        <end position="138"/>
    </location>
    <ligand>
        <name>2-[(2R,5Z)-2-carboxy-4-methylthiazol-5(2H)-ylidene]ethyl phosphate</name>
        <dbReference type="ChEBI" id="CHEBI:62899"/>
    </ligand>
</feature>
<feature type="binding site" evidence="1">
    <location>
        <position position="139"/>
    </location>
    <ligand>
        <name>4-amino-2-methyl-5-(diphosphooxymethyl)pyrimidine</name>
        <dbReference type="ChEBI" id="CHEBI:57841"/>
    </ligand>
</feature>
<feature type="binding site" evidence="1">
    <location>
        <position position="166"/>
    </location>
    <ligand>
        <name>2-[(2R,5Z)-2-carboxy-4-methylthiazol-5(2H)-ylidene]ethyl phosphate</name>
        <dbReference type="ChEBI" id="CHEBI:62899"/>
    </ligand>
</feature>
<feature type="binding site" evidence="1">
    <location>
        <begin position="186"/>
        <end position="187"/>
    </location>
    <ligand>
        <name>2-[(2R,5Z)-2-carboxy-4-methylthiazol-5(2H)-ylidene]ethyl phosphate</name>
        <dbReference type="ChEBI" id="CHEBI:62899"/>
    </ligand>
</feature>